<protein>
    <recommendedName>
        <fullName evidence="1">ATP-dependent protease ATPase subunit HslU</fullName>
    </recommendedName>
    <alternativeName>
        <fullName evidence="1">Unfoldase HslU</fullName>
    </alternativeName>
</protein>
<proteinExistence type="inferred from homology"/>
<name>HSLU_SHEWM</name>
<accession>B1KK51</accession>
<dbReference type="EMBL" id="CP000961">
    <property type="protein sequence ID" value="ACA88682.1"/>
    <property type="molecule type" value="Genomic_DNA"/>
</dbReference>
<dbReference type="RefSeq" id="WP_012327008.1">
    <property type="nucleotide sequence ID" value="NC_010506.1"/>
</dbReference>
<dbReference type="SMR" id="B1KK51"/>
<dbReference type="STRING" id="392500.Swoo_4430"/>
<dbReference type="KEGG" id="swd:Swoo_4430"/>
<dbReference type="eggNOG" id="COG1220">
    <property type="taxonomic scope" value="Bacteria"/>
</dbReference>
<dbReference type="HOGENOM" id="CLU_033123_0_0_6"/>
<dbReference type="Proteomes" id="UP000002168">
    <property type="component" value="Chromosome"/>
</dbReference>
<dbReference type="GO" id="GO:0009376">
    <property type="term" value="C:HslUV protease complex"/>
    <property type="evidence" value="ECO:0007669"/>
    <property type="project" value="UniProtKB-UniRule"/>
</dbReference>
<dbReference type="GO" id="GO:0005524">
    <property type="term" value="F:ATP binding"/>
    <property type="evidence" value="ECO:0007669"/>
    <property type="project" value="UniProtKB-UniRule"/>
</dbReference>
<dbReference type="GO" id="GO:0016887">
    <property type="term" value="F:ATP hydrolysis activity"/>
    <property type="evidence" value="ECO:0007669"/>
    <property type="project" value="InterPro"/>
</dbReference>
<dbReference type="GO" id="GO:0008233">
    <property type="term" value="F:peptidase activity"/>
    <property type="evidence" value="ECO:0007669"/>
    <property type="project" value="InterPro"/>
</dbReference>
<dbReference type="GO" id="GO:0036402">
    <property type="term" value="F:proteasome-activating activity"/>
    <property type="evidence" value="ECO:0007669"/>
    <property type="project" value="UniProtKB-UniRule"/>
</dbReference>
<dbReference type="GO" id="GO:0043335">
    <property type="term" value="P:protein unfolding"/>
    <property type="evidence" value="ECO:0007669"/>
    <property type="project" value="UniProtKB-UniRule"/>
</dbReference>
<dbReference type="GO" id="GO:0051603">
    <property type="term" value="P:proteolysis involved in protein catabolic process"/>
    <property type="evidence" value="ECO:0007669"/>
    <property type="project" value="TreeGrafter"/>
</dbReference>
<dbReference type="CDD" id="cd19498">
    <property type="entry name" value="RecA-like_HslU"/>
    <property type="match status" value="1"/>
</dbReference>
<dbReference type="FunFam" id="1.10.8.10:FF:000028">
    <property type="entry name" value="ATP-dependent protease ATPase subunit HslU"/>
    <property type="match status" value="1"/>
</dbReference>
<dbReference type="FunFam" id="1.10.8.60:FF:000027">
    <property type="entry name" value="ATP-dependent protease ATPase subunit HslU"/>
    <property type="match status" value="1"/>
</dbReference>
<dbReference type="FunFam" id="3.40.50.300:FF:000213">
    <property type="entry name" value="ATP-dependent protease ATPase subunit HslU"/>
    <property type="match status" value="1"/>
</dbReference>
<dbReference type="FunFam" id="3.40.50.300:FF:000220">
    <property type="entry name" value="ATP-dependent protease ATPase subunit HslU"/>
    <property type="match status" value="1"/>
</dbReference>
<dbReference type="Gene3D" id="1.10.8.60">
    <property type="match status" value="1"/>
</dbReference>
<dbReference type="Gene3D" id="1.10.8.10">
    <property type="entry name" value="DNA helicase RuvA subunit, C-terminal domain"/>
    <property type="match status" value="1"/>
</dbReference>
<dbReference type="Gene3D" id="3.40.50.300">
    <property type="entry name" value="P-loop containing nucleotide triphosphate hydrolases"/>
    <property type="match status" value="1"/>
</dbReference>
<dbReference type="HAMAP" id="MF_00249">
    <property type="entry name" value="HslU"/>
    <property type="match status" value="1"/>
</dbReference>
<dbReference type="InterPro" id="IPR003593">
    <property type="entry name" value="AAA+_ATPase"/>
</dbReference>
<dbReference type="InterPro" id="IPR050052">
    <property type="entry name" value="ATP-dep_Clp_protease_ClpX"/>
</dbReference>
<dbReference type="InterPro" id="IPR003959">
    <property type="entry name" value="ATPase_AAA_core"/>
</dbReference>
<dbReference type="InterPro" id="IPR019489">
    <property type="entry name" value="Clp_ATPase_C"/>
</dbReference>
<dbReference type="InterPro" id="IPR004491">
    <property type="entry name" value="HslU"/>
</dbReference>
<dbReference type="InterPro" id="IPR027417">
    <property type="entry name" value="P-loop_NTPase"/>
</dbReference>
<dbReference type="NCBIfam" id="TIGR00390">
    <property type="entry name" value="hslU"/>
    <property type="match status" value="1"/>
</dbReference>
<dbReference type="NCBIfam" id="NF003544">
    <property type="entry name" value="PRK05201.1"/>
    <property type="match status" value="1"/>
</dbReference>
<dbReference type="PANTHER" id="PTHR48102">
    <property type="entry name" value="ATP-DEPENDENT CLP PROTEASE ATP-BINDING SUBUNIT CLPX-LIKE, MITOCHONDRIAL-RELATED"/>
    <property type="match status" value="1"/>
</dbReference>
<dbReference type="PANTHER" id="PTHR48102:SF3">
    <property type="entry name" value="ATP-DEPENDENT PROTEASE ATPASE SUBUNIT HSLU"/>
    <property type="match status" value="1"/>
</dbReference>
<dbReference type="Pfam" id="PF00004">
    <property type="entry name" value="AAA"/>
    <property type="match status" value="1"/>
</dbReference>
<dbReference type="Pfam" id="PF07724">
    <property type="entry name" value="AAA_2"/>
    <property type="match status" value="1"/>
</dbReference>
<dbReference type="SMART" id="SM00382">
    <property type="entry name" value="AAA"/>
    <property type="match status" value="1"/>
</dbReference>
<dbReference type="SMART" id="SM01086">
    <property type="entry name" value="ClpB_D2-small"/>
    <property type="match status" value="1"/>
</dbReference>
<dbReference type="SUPFAM" id="SSF52540">
    <property type="entry name" value="P-loop containing nucleoside triphosphate hydrolases"/>
    <property type="match status" value="1"/>
</dbReference>
<reference key="1">
    <citation type="submission" date="2008-02" db="EMBL/GenBank/DDBJ databases">
        <title>Complete sequence of Shewanella woodyi ATCC 51908.</title>
        <authorList>
            <consortium name="US DOE Joint Genome Institute"/>
            <person name="Copeland A."/>
            <person name="Lucas S."/>
            <person name="Lapidus A."/>
            <person name="Glavina del Rio T."/>
            <person name="Dalin E."/>
            <person name="Tice H."/>
            <person name="Bruce D."/>
            <person name="Goodwin L."/>
            <person name="Pitluck S."/>
            <person name="Sims D."/>
            <person name="Brettin T."/>
            <person name="Detter J.C."/>
            <person name="Han C."/>
            <person name="Kuske C.R."/>
            <person name="Schmutz J."/>
            <person name="Larimer F."/>
            <person name="Land M."/>
            <person name="Hauser L."/>
            <person name="Kyrpides N."/>
            <person name="Lykidis A."/>
            <person name="Zhao J.-S."/>
            <person name="Richardson P."/>
        </authorList>
    </citation>
    <scope>NUCLEOTIDE SEQUENCE [LARGE SCALE GENOMIC DNA]</scope>
    <source>
        <strain>ATCC 51908 / MS32</strain>
    </source>
</reference>
<feature type="chain" id="PRO_1000100976" description="ATP-dependent protease ATPase subunit HslU">
    <location>
        <begin position="1"/>
        <end position="441"/>
    </location>
</feature>
<feature type="binding site" evidence="1">
    <location>
        <position position="18"/>
    </location>
    <ligand>
        <name>ATP</name>
        <dbReference type="ChEBI" id="CHEBI:30616"/>
    </ligand>
</feature>
<feature type="binding site" evidence="1">
    <location>
        <begin position="60"/>
        <end position="65"/>
    </location>
    <ligand>
        <name>ATP</name>
        <dbReference type="ChEBI" id="CHEBI:30616"/>
    </ligand>
</feature>
<feature type="binding site" evidence="1">
    <location>
        <position position="254"/>
    </location>
    <ligand>
        <name>ATP</name>
        <dbReference type="ChEBI" id="CHEBI:30616"/>
    </ligand>
</feature>
<feature type="binding site" evidence="1">
    <location>
        <position position="319"/>
    </location>
    <ligand>
        <name>ATP</name>
        <dbReference type="ChEBI" id="CHEBI:30616"/>
    </ligand>
</feature>
<feature type="binding site" evidence="1">
    <location>
        <position position="391"/>
    </location>
    <ligand>
        <name>ATP</name>
        <dbReference type="ChEBI" id="CHEBI:30616"/>
    </ligand>
</feature>
<evidence type="ECO:0000255" key="1">
    <source>
        <dbReference type="HAMAP-Rule" id="MF_00249"/>
    </source>
</evidence>
<sequence>MSEMTPREIVHELDSHIIGQHNAKRSVAIALRNRWRRMQLDADFRQEVTPKNILMIGPTGVGKTEIARRLAKLARAPFIKVEATKFTEVGYVGKEVEQIIRDLTDSAIKLTREEQMKKCKFRAEEAAEERILDALLPKAKEDWDNEKPDDSATRQVFRKKLREGQLDDKEIEIDVSAPQVGIEIMSPPGMEEMTNQLQSMFQNMGLGASKRRKMPIKEAYKLMVEEEAAKLVNQDDLKEQAIELVEQHGIVFLDEIDKICKRGEASGPDVSREGVQRDLLPLVEGCTVNTKHGMVKTDHILFIASGAFQMSKPSDLIPELQGRLPIRVELDALSADDFKRILTEPHASLTEQQIALMGTEGVKIEFTEDGIESIAQAAWQVNERTENIGARRLHTVMEKLTEELSYEASDKSGSTIVIDAKYVSDHLDNLVQDEDLSRFIL</sequence>
<gene>
    <name evidence="1" type="primary">hslU</name>
    <name type="ordered locus">Swoo_4430</name>
</gene>
<comment type="function">
    <text evidence="1">ATPase subunit of a proteasome-like degradation complex; this subunit has chaperone activity. The binding of ATP and its subsequent hydrolysis by HslU are essential for unfolding of protein substrates subsequently hydrolyzed by HslV. HslU recognizes the N-terminal part of its protein substrates and unfolds these before they are guided to HslV for hydrolysis.</text>
</comment>
<comment type="subunit">
    <text evidence="1">A double ring-shaped homohexamer of HslV is capped on each side by a ring-shaped HslU homohexamer. The assembly of the HslU/HslV complex is dependent on binding of ATP.</text>
</comment>
<comment type="subcellular location">
    <subcellularLocation>
        <location evidence="1">Cytoplasm</location>
    </subcellularLocation>
</comment>
<comment type="similarity">
    <text evidence="1">Belongs to the ClpX chaperone family. HslU subfamily.</text>
</comment>
<organism>
    <name type="scientific">Shewanella woodyi (strain ATCC 51908 / MS32)</name>
    <dbReference type="NCBI Taxonomy" id="392500"/>
    <lineage>
        <taxon>Bacteria</taxon>
        <taxon>Pseudomonadati</taxon>
        <taxon>Pseudomonadota</taxon>
        <taxon>Gammaproteobacteria</taxon>
        <taxon>Alteromonadales</taxon>
        <taxon>Shewanellaceae</taxon>
        <taxon>Shewanella</taxon>
    </lineage>
</organism>
<keyword id="KW-0067">ATP-binding</keyword>
<keyword id="KW-0143">Chaperone</keyword>
<keyword id="KW-0963">Cytoplasm</keyword>
<keyword id="KW-0547">Nucleotide-binding</keyword>
<keyword id="KW-1185">Reference proteome</keyword>
<keyword id="KW-0346">Stress response</keyword>